<reference key="1">
    <citation type="journal article" date="2002" name="Proc. Natl. Acad. Sci. U.S.A.">
        <title>The Brucella suis genome reveals fundamental similarities between animal and plant pathogens and symbionts.</title>
        <authorList>
            <person name="Paulsen I.T."/>
            <person name="Seshadri R."/>
            <person name="Nelson K.E."/>
            <person name="Eisen J.A."/>
            <person name="Heidelberg J.F."/>
            <person name="Read T.D."/>
            <person name="Dodson R.J."/>
            <person name="Umayam L.A."/>
            <person name="Brinkac L.M."/>
            <person name="Beanan M.J."/>
            <person name="Daugherty S.C."/>
            <person name="DeBoy R.T."/>
            <person name="Durkin A.S."/>
            <person name="Kolonay J.F."/>
            <person name="Madupu R."/>
            <person name="Nelson W.C."/>
            <person name="Ayodeji B."/>
            <person name="Kraul M."/>
            <person name="Shetty J."/>
            <person name="Malek J.A."/>
            <person name="Van Aken S.E."/>
            <person name="Riedmuller S."/>
            <person name="Tettelin H."/>
            <person name="Gill S.R."/>
            <person name="White O."/>
            <person name="Salzberg S.L."/>
            <person name="Hoover D.L."/>
            <person name="Lindler L.E."/>
            <person name="Halling S.M."/>
            <person name="Boyle S.M."/>
            <person name="Fraser C.M."/>
        </authorList>
    </citation>
    <scope>NUCLEOTIDE SEQUENCE [LARGE SCALE GENOMIC DNA]</scope>
    <source>
        <strain>1330</strain>
    </source>
</reference>
<reference key="2">
    <citation type="journal article" date="2011" name="J. Bacteriol.">
        <title>Revised genome sequence of Brucella suis 1330.</title>
        <authorList>
            <person name="Tae H."/>
            <person name="Shallom S."/>
            <person name="Settlage R."/>
            <person name="Preston D."/>
            <person name="Adams L.G."/>
            <person name="Garner H.R."/>
        </authorList>
    </citation>
    <scope>NUCLEOTIDE SEQUENCE [LARGE SCALE GENOMIC DNA]</scope>
    <source>
        <strain>1330</strain>
    </source>
</reference>
<accession>Q8FXR6</accession>
<accession>G0K9K9</accession>
<dbReference type="EC" id="3.2.2.23" evidence="2"/>
<dbReference type="EC" id="4.2.99.18" evidence="2"/>
<dbReference type="EMBL" id="AE014291">
    <property type="protein sequence ID" value="AAN31072.1"/>
    <property type="molecule type" value="Genomic_DNA"/>
</dbReference>
<dbReference type="EMBL" id="CP002997">
    <property type="protein sequence ID" value="AEM19490.1"/>
    <property type="molecule type" value="Genomic_DNA"/>
</dbReference>
<dbReference type="RefSeq" id="WP_004691191.1">
    <property type="nucleotide sequence ID" value="NZ_KN046804.1"/>
</dbReference>
<dbReference type="SMR" id="Q8FXR6"/>
<dbReference type="GeneID" id="55591744"/>
<dbReference type="KEGG" id="bms:BR2183"/>
<dbReference type="KEGG" id="bsi:BS1330_I2177"/>
<dbReference type="PATRIC" id="fig|204722.21.peg.626"/>
<dbReference type="HOGENOM" id="CLU_038423_1_1_5"/>
<dbReference type="PhylomeDB" id="Q8FXR6"/>
<dbReference type="PRO" id="PR:Q8FXR6"/>
<dbReference type="Proteomes" id="UP000007104">
    <property type="component" value="Chromosome I"/>
</dbReference>
<dbReference type="GO" id="GO:0034039">
    <property type="term" value="F:8-oxo-7,8-dihydroguanine DNA N-glycosylase activity"/>
    <property type="evidence" value="ECO:0007669"/>
    <property type="project" value="TreeGrafter"/>
</dbReference>
<dbReference type="GO" id="GO:0140078">
    <property type="term" value="F:class I DNA-(apurinic or apyrimidinic site) endonuclease activity"/>
    <property type="evidence" value="ECO:0007669"/>
    <property type="project" value="UniProtKB-EC"/>
</dbReference>
<dbReference type="GO" id="GO:0003684">
    <property type="term" value="F:damaged DNA binding"/>
    <property type="evidence" value="ECO:0007669"/>
    <property type="project" value="InterPro"/>
</dbReference>
<dbReference type="GO" id="GO:0008270">
    <property type="term" value="F:zinc ion binding"/>
    <property type="evidence" value="ECO:0007669"/>
    <property type="project" value="UniProtKB-UniRule"/>
</dbReference>
<dbReference type="GO" id="GO:0006284">
    <property type="term" value="P:base-excision repair"/>
    <property type="evidence" value="ECO:0007669"/>
    <property type="project" value="InterPro"/>
</dbReference>
<dbReference type="CDD" id="cd08966">
    <property type="entry name" value="EcFpg-like_N"/>
    <property type="match status" value="1"/>
</dbReference>
<dbReference type="FunFam" id="1.10.8.50:FF:000003">
    <property type="entry name" value="Formamidopyrimidine-DNA glycosylase"/>
    <property type="match status" value="1"/>
</dbReference>
<dbReference type="Gene3D" id="1.10.8.50">
    <property type="match status" value="1"/>
</dbReference>
<dbReference type="Gene3D" id="3.20.190.10">
    <property type="entry name" value="MutM-like, N-terminal"/>
    <property type="match status" value="1"/>
</dbReference>
<dbReference type="HAMAP" id="MF_00103">
    <property type="entry name" value="Fapy_DNA_glycosyl"/>
    <property type="match status" value="1"/>
</dbReference>
<dbReference type="InterPro" id="IPR015886">
    <property type="entry name" value="DNA_glyclase/AP_lyase_DNA-bd"/>
</dbReference>
<dbReference type="InterPro" id="IPR015887">
    <property type="entry name" value="DNA_glyclase_Znf_dom_DNA_BS"/>
</dbReference>
<dbReference type="InterPro" id="IPR020629">
    <property type="entry name" value="Formamido-pyr_DNA_Glyclase"/>
</dbReference>
<dbReference type="InterPro" id="IPR012319">
    <property type="entry name" value="FPG_cat"/>
</dbReference>
<dbReference type="InterPro" id="IPR035937">
    <property type="entry name" value="MutM-like_N-ter"/>
</dbReference>
<dbReference type="InterPro" id="IPR010979">
    <property type="entry name" value="Ribosomal_uS13-like_H2TH"/>
</dbReference>
<dbReference type="InterPro" id="IPR000214">
    <property type="entry name" value="Znf_DNA_glyclase/AP_lyase"/>
</dbReference>
<dbReference type="InterPro" id="IPR010663">
    <property type="entry name" value="Znf_FPG/IleRS"/>
</dbReference>
<dbReference type="NCBIfam" id="TIGR00577">
    <property type="entry name" value="fpg"/>
    <property type="match status" value="1"/>
</dbReference>
<dbReference type="NCBIfam" id="NF002211">
    <property type="entry name" value="PRK01103.1"/>
    <property type="match status" value="1"/>
</dbReference>
<dbReference type="PANTHER" id="PTHR22993">
    <property type="entry name" value="FORMAMIDOPYRIMIDINE-DNA GLYCOSYLASE"/>
    <property type="match status" value="1"/>
</dbReference>
<dbReference type="PANTHER" id="PTHR22993:SF9">
    <property type="entry name" value="FORMAMIDOPYRIMIDINE-DNA GLYCOSYLASE"/>
    <property type="match status" value="1"/>
</dbReference>
<dbReference type="Pfam" id="PF01149">
    <property type="entry name" value="Fapy_DNA_glyco"/>
    <property type="match status" value="1"/>
</dbReference>
<dbReference type="Pfam" id="PF06831">
    <property type="entry name" value="H2TH"/>
    <property type="match status" value="1"/>
</dbReference>
<dbReference type="Pfam" id="PF06827">
    <property type="entry name" value="zf-FPG_IleRS"/>
    <property type="match status" value="1"/>
</dbReference>
<dbReference type="SMART" id="SM00898">
    <property type="entry name" value="Fapy_DNA_glyco"/>
    <property type="match status" value="1"/>
</dbReference>
<dbReference type="SMART" id="SM01232">
    <property type="entry name" value="H2TH"/>
    <property type="match status" value="1"/>
</dbReference>
<dbReference type="SUPFAM" id="SSF57716">
    <property type="entry name" value="Glucocorticoid receptor-like (DNA-binding domain)"/>
    <property type="match status" value="1"/>
</dbReference>
<dbReference type="SUPFAM" id="SSF81624">
    <property type="entry name" value="N-terminal domain of MutM-like DNA repair proteins"/>
    <property type="match status" value="1"/>
</dbReference>
<dbReference type="SUPFAM" id="SSF46946">
    <property type="entry name" value="S13-like H2TH domain"/>
    <property type="match status" value="1"/>
</dbReference>
<dbReference type="PROSITE" id="PS51068">
    <property type="entry name" value="FPG_CAT"/>
    <property type="match status" value="1"/>
</dbReference>
<dbReference type="PROSITE" id="PS01242">
    <property type="entry name" value="ZF_FPG_1"/>
    <property type="match status" value="1"/>
</dbReference>
<dbReference type="PROSITE" id="PS51066">
    <property type="entry name" value="ZF_FPG_2"/>
    <property type="match status" value="1"/>
</dbReference>
<feature type="initiator methionine" description="Removed" evidence="1">
    <location>
        <position position="1"/>
    </location>
</feature>
<feature type="chain" id="PRO_0000170816" description="Formamidopyrimidine-DNA glycosylase">
    <location>
        <begin position="2"/>
        <end position="293"/>
    </location>
</feature>
<feature type="zinc finger region" description="FPG-type" evidence="2">
    <location>
        <begin position="257"/>
        <end position="293"/>
    </location>
</feature>
<feature type="active site" description="Schiff-base intermediate with DNA" evidence="2">
    <location>
        <position position="2"/>
    </location>
</feature>
<feature type="active site" description="Proton donor" evidence="2">
    <location>
        <position position="3"/>
    </location>
</feature>
<feature type="active site" description="Proton donor; for beta-elimination activity" evidence="2">
    <location>
        <position position="58"/>
    </location>
</feature>
<feature type="active site" description="Proton donor; for delta-elimination activity" evidence="2">
    <location>
        <position position="283"/>
    </location>
</feature>
<feature type="binding site" evidence="2">
    <location>
        <position position="104"/>
    </location>
    <ligand>
        <name>DNA</name>
        <dbReference type="ChEBI" id="CHEBI:16991"/>
    </ligand>
</feature>
<feature type="binding site" evidence="2">
    <location>
        <position position="127"/>
    </location>
    <ligand>
        <name>DNA</name>
        <dbReference type="ChEBI" id="CHEBI:16991"/>
    </ligand>
</feature>
<feature type="binding site" evidence="2">
    <location>
        <position position="170"/>
    </location>
    <ligand>
        <name>DNA</name>
        <dbReference type="ChEBI" id="CHEBI:16991"/>
    </ligand>
</feature>
<protein>
    <recommendedName>
        <fullName evidence="2">Formamidopyrimidine-DNA glycosylase</fullName>
        <shortName evidence="2">Fapy-DNA glycosylase</shortName>
        <ecNumber evidence="2">3.2.2.23</ecNumber>
    </recommendedName>
    <alternativeName>
        <fullName evidence="2">DNA-(apurinic or apyrimidinic site) lyase MutM</fullName>
        <shortName evidence="2">AP lyase MutM</shortName>
        <ecNumber evidence="2">4.2.99.18</ecNumber>
    </alternativeName>
</protein>
<name>FPG_BRUSU</name>
<comment type="function">
    <text evidence="2">Involved in base excision repair of DNA damaged by oxidation or by mutagenic agents. Acts as a DNA glycosylase that recognizes and removes damaged bases. Has a preference for oxidized purines, such as 7,8-dihydro-8-oxoguanine (8-oxoG). Has AP (apurinic/apyrimidinic) lyase activity and introduces nicks in the DNA strand. Cleaves the DNA backbone by beta-delta elimination to generate a single-strand break at the site of the removed base with both 3'- and 5'-phosphates.</text>
</comment>
<comment type="catalytic activity">
    <reaction evidence="2">
        <text>Hydrolysis of DNA containing ring-opened 7-methylguanine residues, releasing 2,6-diamino-4-hydroxy-5-(N-methyl)formamidopyrimidine.</text>
        <dbReference type="EC" id="3.2.2.23"/>
    </reaction>
</comment>
<comment type="catalytic activity">
    <reaction evidence="2">
        <text>2'-deoxyribonucleotide-(2'-deoxyribose 5'-phosphate)-2'-deoxyribonucleotide-DNA = a 3'-end 2'-deoxyribonucleotide-(2,3-dehydro-2,3-deoxyribose 5'-phosphate)-DNA + a 5'-end 5'-phospho-2'-deoxyribonucleoside-DNA + H(+)</text>
        <dbReference type="Rhea" id="RHEA:66592"/>
        <dbReference type="Rhea" id="RHEA-COMP:13180"/>
        <dbReference type="Rhea" id="RHEA-COMP:16897"/>
        <dbReference type="Rhea" id="RHEA-COMP:17067"/>
        <dbReference type="ChEBI" id="CHEBI:15378"/>
        <dbReference type="ChEBI" id="CHEBI:136412"/>
        <dbReference type="ChEBI" id="CHEBI:157695"/>
        <dbReference type="ChEBI" id="CHEBI:167181"/>
        <dbReference type="EC" id="4.2.99.18"/>
    </reaction>
</comment>
<comment type="cofactor">
    <cofactor evidence="2">
        <name>Zn(2+)</name>
        <dbReference type="ChEBI" id="CHEBI:29105"/>
    </cofactor>
    <text evidence="2">Binds 1 zinc ion per subunit.</text>
</comment>
<comment type="subunit">
    <text evidence="2">Monomer.</text>
</comment>
<comment type="similarity">
    <text evidence="2">Belongs to the FPG family.</text>
</comment>
<gene>
    <name evidence="2" type="primary">mutM</name>
    <name evidence="2" type="synonym">fpg</name>
    <name type="ordered locus">BR2183</name>
    <name type="ordered locus">BS1330_I2177</name>
</gene>
<keyword id="KW-0227">DNA damage</keyword>
<keyword id="KW-0234">DNA repair</keyword>
<keyword id="KW-0238">DNA-binding</keyword>
<keyword id="KW-0326">Glycosidase</keyword>
<keyword id="KW-0378">Hydrolase</keyword>
<keyword id="KW-0456">Lyase</keyword>
<keyword id="KW-0479">Metal-binding</keyword>
<keyword id="KW-0511">Multifunctional enzyme</keyword>
<keyword id="KW-0862">Zinc</keyword>
<keyword id="KW-0863">Zinc-finger</keyword>
<proteinExistence type="inferred from homology"/>
<evidence type="ECO:0000250" key="1"/>
<evidence type="ECO:0000255" key="2">
    <source>
        <dbReference type="HAMAP-Rule" id="MF_00103"/>
    </source>
</evidence>
<organism>
    <name type="scientific">Brucella suis biovar 1 (strain 1330)</name>
    <dbReference type="NCBI Taxonomy" id="204722"/>
    <lineage>
        <taxon>Bacteria</taxon>
        <taxon>Pseudomonadati</taxon>
        <taxon>Pseudomonadota</taxon>
        <taxon>Alphaproteobacteria</taxon>
        <taxon>Hyphomicrobiales</taxon>
        <taxon>Brucellaceae</taxon>
        <taxon>Brucella/Ochrobactrum group</taxon>
        <taxon>Brucella</taxon>
    </lineage>
</organism>
<sequence>MPELPEVETVRRGLQPFMEGATVVRVEQNRPDLRFAFPENFAERLSGRRIEALGRRAKYLTVHLDDGLSIISHLGMSGSFRIEAEDAQGLPGGFHHERSKNSLHDHVVFHLMRPDGASARIIYNDPRRFGFMLFAEKGALEEHPLLKDLGVEPTGNLLSGEVLAALFKGRRKPLKAALLDQRLIAGLGNIYVCEALWRAGLSPMRAAGSVAGEMDVMERLAGAIRSVIAQAIAAGGSSLKDYIQADGALGYFQHSFSVYGREGKPCRNPACGGTVERVVQSGRSTFFCASCQT</sequence>